<feature type="chain" id="PRO_0000414132" description="tRNA (guanine(37)-N(1))-methyltransferase">
    <location>
        <begin position="1"/>
        <end position="474"/>
    </location>
</feature>
<feature type="region of interest" description="Disordered" evidence="2">
    <location>
        <begin position="452"/>
        <end position="474"/>
    </location>
</feature>
<feature type="compositionally biased region" description="Acidic residues" evidence="2">
    <location>
        <begin position="452"/>
        <end position="464"/>
    </location>
</feature>
<feature type="compositionally biased region" description="Basic and acidic residues" evidence="2">
    <location>
        <begin position="465"/>
        <end position="474"/>
    </location>
</feature>
<feature type="binding site" evidence="1">
    <location>
        <position position="234"/>
    </location>
    <ligand>
        <name>S-adenosyl-L-methionine</name>
        <dbReference type="ChEBI" id="CHEBI:59789"/>
    </ligand>
</feature>
<feature type="binding site" evidence="1">
    <location>
        <begin position="274"/>
        <end position="275"/>
    </location>
    <ligand>
        <name>S-adenosyl-L-methionine</name>
        <dbReference type="ChEBI" id="CHEBI:59789"/>
    </ligand>
</feature>
<feature type="binding site" evidence="1">
    <location>
        <begin position="303"/>
        <end position="304"/>
    </location>
    <ligand>
        <name>S-adenosyl-L-methionine</name>
        <dbReference type="ChEBI" id="CHEBI:59789"/>
    </ligand>
</feature>
<feature type="binding site" evidence="1">
    <location>
        <position position="345"/>
    </location>
    <ligand>
        <name>S-adenosyl-L-methionine</name>
        <dbReference type="ChEBI" id="CHEBI:59789"/>
    </ligand>
</feature>
<gene>
    <name type="ORF">C53A5.17</name>
</gene>
<dbReference type="EC" id="2.1.1.228" evidence="1"/>
<dbReference type="EMBL" id="Z81486">
    <property type="protein sequence ID" value="CAP16267.1"/>
    <property type="molecule type" value="Genomic_DNA"/>
</dbReference>
<dbReference type="EMBL" id="Z78015">
    <property type="protein sequence ID" value="CAP16267.1"/>
    <property type="status" value="JOINED"/>
    <property type="molecule type" value="Genomic_DNA"/>
</dbReference>
<dbReference type="RefSeq" id="NP_001256592.1">
    <property type="nucleotide sequence ID" value="NM_001269663.2"/>
</dbReference>
<dbReference type="SMR" id="A8WHT1"/>
<dbReference type="FunCoup" id="A8WHT1">
    <property type="interactions" value="2380"/>
</dbReference>
<dbReference type="STRING" id="6239.C53A5.17.1"/>
<dbReference type="PaxDb" id="6239-C53A5.17"/>
<dbReference type="PeptideAtlas" id="A8WHT1"/>
<dbReference type="EnsemblMetazoa" id="C53A5.17.1">
    <property type="protein sequence ID" value="C53A5.17.1"/>
    <property type="gene ID" value="WBGene00194707"/>
</dbReference>
<dbReference type="GeneID" id="13216595"/>
<dbReference type="KEGG" id="cel:CELE_C53A5.17"/>
<dbReference type="UCSC" id="C53A5.2c">
    <property type="organism name" value="c. elegans"/>
</dbReference>
<dbReference type="AGR" id="WB:WBGene00194707"/>
<dbReference type="CTD" id="13216595"/>
<dbReference type="WormBase" id="C53A5.17">
    <property type="protein sequence ID" value="CE41622"/>
    <property type="gene ID" value="WBGene00194707"/>
</dbReference>
<dbReference type="eggNOG" id="KOG2078">
    <property type="taxonomic scope" value="Eukaryota"/>
</dbReference>
<dbReference type="eggNOG" id="KOG2277">
    <property type="taxonomic scope" value="Eukaryota"/>
</dbReference>
<dbReference type="GeneTree" id="ENSGT00940000153304"/>
<dbReference type="HOGENOM" id="CLU_022610_2_3_1"/>
<dbReference type="InParanoid" id="A8WHT1"/>
<dbReference type="OMA" id="VGSHSQF"/>
<dbReference type="OrthoDB" id="408788at2759"/>
<dbReference type="PhylomeDB" id="A8WHT1"/>
<dbReference type="PRO" id="PR:A8WHT1"/>
<dbReference type="Proteomes" id="UP000001940">
    <property type="component" value="Chromosome V"/>
</dbReference>
<dbReference type="Bgee" id="WBGene00194707">
    <property type="expression patterns" value="Expressed in adult organism and 3 other cell types or tissues"/>
</dbReference>
<dbReference type="GO" id="GO:0005737">
    <property type="term" value="C:cytoplasm"/>
    <property type="evidence" value="ECO:0000318"/>
    <property type="project" value="GO_Central"/>
</dbReference>
<dbReference type="GO" id="GO:0005759">
    <property type="term" value="C:mitochondrial matrix"/>
    <property type="evidence" value="ECO:0000318"/>
    <property type="project" value="GO_Central"/>
</dbReference>
<dbReference type="GO" id="GO:0005634">
    <property type="term" value="C:nucleus"/>
    <property type="evidence" value="ECO:0007669"/>
    <property type="project" value="UniProtKB-SubCell"/>
</dbReference>
<dbReference type="GO" id="GO:0052906">
    <property type="term" value="F:tRNA (guanine(37)-N1)-methyltransferase activity"/>
    <property type="evidence" value="ECO:0007669"/>
    <property type="project" value="UniProtKB-UniRule"/>
</dbReference>
<dbReference type="GO" id="GO:0008175">
    <property type="term" value="F:tRNA methyltransferase activity"/>
    <property type="evidence" value="ECO:0000318"/>
    <property type="project" value="GO_Central"/>
</dbReference>
<dbReference type="GO" id="GO:0070901">
    <property type="term" value="P:mitochondrial tRNA methylation"/>
    <property type="evidence" value="ECO:0000318"/>
    <property type="project" value="GO_Central"/>
</dbReference>
<dbReference type="GO" id="GO:0002939">
    <property type="term" value="P:tRNA N1-guanine methylation"/>
    <property type="evidence" value="ECO:0000318"/>
    <property type="project" value="GO_Central"/>
</dbReference>
<dbReference type="CDD" id="cd02440">
    <property type="entry name" value="AdoMet_MTases"/>
    <property type="match status" value="1"/>
</dbReference>
<dbReference type="FunFam" id="3.30.300.110:FF:000001">
    <property type="entry name" value="tRNA (guanine(37)-N1)-methyltransferase"/>
    <property type="match status" value="1"/>
</dbReference>
<dbReference type="FunFam" id="3.40.50.150:FF:000423">
    <property type="entry name" value="tRNA (guanine(37)-N1)-methyltransferase"/>
    <property type="match status" value="1"/>
</dbReference>
<dbReference type="Gene3D" id="3.30.300.110">
    <property type="entry name" value="Met-10+ protein-like domains"/>
    <property type="match status" value="1"/>
</dbReference>
<dbReference type="Gene3D" id="3.40.50.150">
    <property type="entry name" value="Vaccinia Virus protein VP39"/>
    <property type="match status" value="1"/>
</dbReference>
<dbReference type="HAMAP" id="MF_03152">
    <property type="entry name" value="TRM5"/>
    <property type="match status" value="1"/>
</dbReference>
<dbReference type="InterPro" id="IPR030382">
    <property type="entry name" value="MeTrfase_TRM5/TYW2"/>
</dbReference>
<dbReference type="InterPro" id="IPR029063">
    <property type="entry name" value="SAM-dependent_MTases_sf"/>
</dbReference>
<dbReference type="InterPro" id="IPR056743">
    <property type="entry name" value="TRM5-TYW2-like_MTfase"/>
</dbReference>
<dbReference type="InterPro" id="IPR056744">
    <property type="entry name" value="TRM5/TYW2-like_N"/>
</dbReference>
<dbReference type="InterPro" id="IPR025792">
    <property type="entry name" value="tRNA_Gua_MeTrfase_euk"/>
</dbReference>
<dbReference type="PANTHER" id="PTHR23245:SF36">
    <property type="entry name" value="TRNA (GUANINE(37)-N1)-METHYLTRANSFERASE"/>
    <property type="match status" value="1"/>
</dbReference>
<dbReference type="PANTHER" id="PTHR23245">
    <property type="entry name" value="TRNA METHYLTRANSFERASE"/>
    <property type="match status" value="1"/>
</dbReference>
<dbReference type="Pfam" id="PF02475">
    <property type="entry name" value="TRM5-TYW2_MTfase"/>
    <property type="match status" value="1"/>
</dbReference>
<dbReference type="Pfam" id="PF25133">
    <property type="entry name" value="TYW2_N_2"/>
    <property type="match status" value="1"/>
</dbReference>
<dbReference type="SUPFAM" id="SSF53335">
    <property type="entry name" value="S-adenosyl-L-methionine-dependent methyltransferases"/>
    <property type="match status" value="1"/>
</dbReference>
<dbReference type="PROSITE" id="PS51684">
    <property type="entry name" value="SAM_MT_TRM5_TYW2"/>
    <property type="match status" value="1"/>
</dbReference>
<proteinExistence type="inferred from homology"/>
<accession>A8WHT1</accession>
<protein>
    <recommendedName>
        <fullName evidence="1">tRNA (guanine(37)-N(1))-methyltransferase</fullName>
        <ecNumber evidence="1">2.1.1.228</ecNumber>
    </recommendedName>
    <alternativeName>
        <fullName evidence="1">M1G-methyltransferase</fullName>
    </alternativeName>
    <alternativeName>
        <fullName evidence="1">tRNA [GM37] methyltransferase</fullName>
    </alternativeName>
    <alternativeName>
        <fullName evidence="1">tRNA methyltransferase 5 homolog</fullName>
    </alternativeName>
</protein>
<reference key="1">
    <citation type="journal article" date="1998" name="Science">
        <title>Genome sequence of the nematode C. elegans: a platform for investigating biology.</title>
        <authorList>
            <consortium name="The C. elegans sequencing consortium"/>
        </authorList>
    </citation>
    <scope>NUCLEOTIDE SEQUENCE [LARGE SCALE GENOMIC DNA]</scope>
    <source>
        <strain>Bristol N2</strain>
    </source>
</reference>
<sequence>MIILKRLFSNMSILQPPEVVRGMTKLEKEAFRMPVDFPVIEIEARDAGIVGRRVRLEPYLIGHKLKPLKNLVDSEKDGKKYLVFHPDKVQEDETRFKILELLKRELGNEKLLDWTTLSKDLTFENWDAKSIFKAVLPVGIDYSSYTQTGHIIHCNFADEILPFRFIIAEVLLDKVNNCKTVVQKGNIITNVYRNLDLELLAGEDNYVTEVKETGLRFKMDFSKVYWNSRLSHEHERVSGMFNTQSLVYDACCGIGPFVLPATLKRKPKRVVANDLNPESVKWLKVNVGLNKIKEERIEIHNMDAKMFIKENVADDVVRLMLEESTAGEFENEVPKPMSEVHVVMNLPAYAVNFLPAFRGALSRFKDEIEKVPLDKRYKWNVYCYLFAKSHVDVPDSWYEDEARRMCDEKTKWERSLVVKCHNVRTVSSRKEMFCAQLELPYEFLLAEPFPDEPEAQCESEEAEEPSSKRIKVDT</sequence>
<comment type="function">
    <text evidence="1">Specifically methylates the N1 position of guanosine-37 in various cytoplasmic and mitochondrial tRNAs. Methylation is not dependent on the nature of the nucleoside 5' of the target nucleoside. This is the first step in the biosynthesis of wybutosine (yW), a modified base adjacent to the anticodon of tRNAs and required for accurate decoding.</text>
</comment>
<comment type="catalytic activity">
    <reaction evidence="1">
        <text>guanosine(37) in tRNA + S-adenosyl-L-methionine = N(1)-methylguanosine(37) in tRNA + S-adenosyl-L-homocysteine + H(+)</text>
        <dbReference type="Rhea" id="RHEA:36899"/>
        <dbReference type="Rhea" id="RHEA-COMP:10145"/>
        <dbReference type="Rhea" id="RHEA-COMP:10147"/>
        <dbReference type="ChEBI" id="CHEBI:15378"/>
        <dbReference type="ChEBI" id="CHEBI:57856"/>
        <dbReference type="ChEBI" id="CHEBI:59789"/>
        <dbReference type="ChEBI" id="CHEBI:73542"/>
        <dbReference type="ChEBI" id="CHEBI:74269"/>
        <dbReference type="EC" id="2.1.1.228"/>
    </reaction>
</comment>
<comment type="subunit">
    <text evidence="1">Monomer.</text>
</comment>
<comment type="subcellular location">
    <subcellularLocation>
        <location evidence="1">Mitochondrion matrix</location>
    </subcellularLocation>
    <subcellularLocation>
        <location evidence="1">Nucleus</location>
    </subcellularLocation>
    <subcellularLocation>
        <location evidence="1">Cytoplasm</location>
    </subcellularLocation>
    <text evidence="1">Predominantly in the mitochondria and in the nucleus.</text>
</comment>
<comment type="similarity">
    <text evidence="3">Belongs to the class I-like SAM-binding methyltransferase superfamily. TRM5/TYW2 family.</text>
</comment>
<name>TRM5_CAEEL</name>
<organism>
    <name type="scientific">Caenorhabditis elegans</name>
    <dbReference type="NCBI Taxonomy" id="6239"/>
    <lineage>
        <taxon>Eukaryota</taxon>
        <taxon>Metazoa</taxon>
        <taxon>Ecdysozoa</taxon>
        <taxon>Nematoda</taxon>
        <taxon>Chromadorea</taxon>
        <taxon>Rhabditida</taxon>
        <taxon>Rhabditina</taxon>
        <taxon>Rhabditomorpha</taxon>
        <taxon>Rhabditoidea</taxon>
        <taxon>Rhabditidae</taxon>
        <taxon>Peloderinae</taxon>
        <taxon>Caenorhabditis</taxon>
    </lineage>
</organism>
<keyword id="KW-0963">Cytoplasm</keyword>
<keyword id="KW-0489">Methyltransferase</keyword>
<keyword id="KW-0496">Mitochondrion</keyword>
<keyword id="KW-0539">Nucleus</keyword>
<keyword id="KW-1185">Reference proteome</keyword>
<keyword id="KW-0949">S-adenosyl-L-methionine</keyword>
<keyword id="KW-0808">Transferase</keyword>
<keyword id="KW-0819">tRNA processing</keyword>
<evidence type="ECO:0000255" key="1">
    <source>
        <dbReference type="HAMAP-Rule" id="MF_03152"/>
    </source>
</evidence>
<evidence type="ECO:0000256" key="2">
    <source>
        <dbReference type="SAM" id="MobiDB-lite"/>
    </source>
</evidence>
<evidence type="ECO:0000305" key="3"/>